<reference key="1">
    <citation type="submission" date="2007-06" db="EMBL/GenBank/DDBJ databases">
        <title>Complete sequence of Marinomonas sp. MWYL1.</title>
        <authorList>
            <consortium name="US DOE Joint Genome Institute"/>
            <person name="Copeland A."/>
            <person name="Lucas S."/>
            <person name="Lapidus A."/>
            <person name="Barry K."/>
            <person name="Glavina del Rio T."/>
            <person name="Dalin E."/>
            <person name="Tice H."/>
            <person name="Pitluck S."/>
            <person name="Kiss H."/>
            <person name="Brettin T."/>
            <person name="Bruce D."/>
            <person name="Detter J.C."/>
            <person name="Han C."/>
            <person name="Schmutz J."/>
            <person name="Larimer F."/>
            <person name="Land M."/>
            <person name="Hauser L."/>
            <person name="Kyrpides N."/>
            <person name="Kim E."/>
            <person name="Johnston A.W.B."/>
            <person name="Todd J.D."/>
            <person name="Rogers R."/>
            <person name="Wexler M."/>
            <person name="Bond P.L."/>
            <person name="Li Y."/>
            <person name="Richardson P."/>
        </authorList>
    </citation>
    <scope>NUCLEOTIDE SEQUENCE [LARGE SCALE GENOMIC DNA]</scope>
    <source>
        <strain>MWYL1</strain>
    </source>
</reference>
<evidence type="ECO:0000255" key="1">
    <source>
        <dbReference type="HAMAP-Rule" id="MF_01326"/>
    </source>
</evidence>
<evidence type="ECO:0000305" key="2"/>
<feature type="chain" id="PRO_1000086484" description="Large ribosomal subunit protein uL24">
    <location>
        <begin position="1"/>
        <end position="105"/>
    </location>
</feature>
<organism>
    <name type="scientific">Marinomonas sp. (strain MWYL1)</name>
    <dbReference type="NCBI Taxonomy" id="400668"/>
    <lineage>
        <taxon>Bacteria</taxon>
        <taxon>Pseudomonadati</taxon>
        <taxon>Pseudomonadota</taxon>
        <taxon>Gammaproteobacteria</taxon>
        <taxon>Oceanospirillales</taxon>
        <taxon>Oceanospirillaceae</taxon>
        <taxon>Marinomonas</taxon>
    </lineage>
</organism>
<proteinExistence type="inferred from homology"/>
<protein>
    <recommendedName>
        <fullName evidence="1">Large ribosomal subunit protein uL24</fullName>
    </recommendedName>
    <alternativeName>
        <fullName evidence="2">50S ribosomal protein L24</fullName>
    </alternativeName>
</protein>
<gene>
    <name evidence="1" type="primary">rplX</name>
    <name type="ordered locus">Mmwyl1_4265</name>
</gene>
<name>RL24_MARMS</name>
<comment type="function">
    <text evidence="1">One of two assembly initiator proteins, it binds directly to the 5'-end of the 23S rRNA, where it nucleates assembly of the 50S subunit.</text>
</comment>
<comment type="function">
    <text evidence="1">One of the proteins that surrounds the polypeptide exit tunnel on the outside of the subunit.</text>
</comment>
<comment type="subunit">
    <text evidence="1">Part of the 50S ribosomal subunit.</text>
</comment>
<comment type="similarity">
    <text evidence="1">Belongs to the universal ribosomal protein uL24 family.</text>
</comment>
<accession>A6W381</accession>
<keyword id="KW-0687">Ribonucleoprotein</keyword>
<keyword id="KW-0689">Ribosomal protein</keyword>
<keyword id="KW-0694">RNA-binding</keyword>
<keyword id="KW-0699">rRNA-binding</keyword>
<sequence>MRKIKRNDEVIVIAGKDKGKRGKVVKVVGENRVLVSGVNTVKKHEKPNPMKGSTGGIVEQEAPIQVSNVAIYNSATGKADRVGFKLNEDGTKVRVFKSNSEAIDA</sequence>
<dbReference type="EMBL" id="CP000749">
    <property type="protein sequence ID" value="ABR73160.1"/>
    <property type="molecule type" value="Genomic_DNA"/>
</dbReference>
<dbReference type="SMR" id="A6W381"/>
<dbReference type="STRING" id="400668.Mmwyl1_4265"/>
<dbReference type="KEGG" id="mmw:Mmwyl1_4265"/>
<dbReference type="eggNOG" id="COG0198">
    <property type="taxonomic scope" value="Bacteria"/>
</dbReference>
<dbReference type="HOGENOM" id="CLU_093315_2_2_6"/>
<dbReference type="OrthoDB" id="9807419at2"/>
<dbReference type="GO" id="GO:1990904">
    <property type="term" value="C:ribonucleoprotein complex"/>
    <property type="evidence" value="ECO:0007669"/>
    <property type="project" value="UniProtKB-KW"/>
</dbReference>
<dbReference type="GO" id="GO:0005840">
    <property type="term" value="C:ribosome"/>
    <property type="evidence" value="ECO:0007669"/>
    <property type="project" value="UniProtKB-KW"/>
</dbReference>
<dbReference type="GO" id="GO:0019843">
    <property type="term" value="F:rRNA binding"/>
    <property type="evidence" value="ECO:0007669"/>
    <property type="project" value="UniProtKB-UniRule"/>
</dbReference>
<dbReference type="GO" id="GO:0003735">
    <property type="term" value="F:structural constituent of ribosome"/>
    <property type="evidence" value="ECO:0007669"/>
    <property type="project" value="InterPro"/>
</dbReference>
<dbReference type="GO" id="GO:0006412">
    <property type="term" value="P:translation"/>
    <property type="evidence" value="ECO:0007669"/>
    <property type="project" value="UniProtKB-UniRule"/>
</dbReference>
<dbReference type="CDD" id="cd06089">
    <property type="entry name" value="KOW_RPL26"/>
    <property type="match status" value="1"/>
</dbReference>
<dbReference type="FunFam" id="2.30.30.30:FF:000004">
    <property type="entry name" value="50S ribosomal protein L24"/>
    <property type="match status" value="1"/>
</dbReference>
<dbReference type="Gene3D" id="2.30.30.30">
    <property type="match status" value="1"/>
</dbReference>
<dbReference type="HAMAP" id="MF_01326_B">
    <property type="entry name" value="Ribosomal_uL24_B"/>
    <property type="match status" value="1"/>
</dbReference>
<dbReference type="InterPro" id="IPR005824">
    <property type="entry name" value="KOW"/>
</dbReference>
<dbReference type="InterPro" id="IPR014722">
    <property type="entry name" value="Rib_uL2_dom2"/>
</dbReference>
<dbReference type="InterPro" id="IPR003256">
    <property type="entry name" value="Ribosomal_uL24"/>
</dbReference>
<dbReference type="InterPro" id="IPR005825">
    <property type="entry name" value="Ribosomal_uL24_CS"/>
</dbReference>
<dbReference type="InterPro" id="IPR041988">
    <property type="entry name" value="Ribosomal_uL24_KOW"/>
</dbReference>
<dbReference type="InterPro" id="IPR008991">
    <property type="entry name" value="Translation_prot_SH3-like_sf"/>
</dbReference>
<dbReference type="NCBIfam" id="TIGR01079">
    <property type="entry name" value="rplX_bact"/>
    <property type="match status" value="1"/>
</dbReference>
<dbReference type="PANTHER" id="PTHR12903">
    <property type="entry name" value="MITOCHONDRIAL RIBOSOMAL PROTEIN L24"/>
    <property type="match status" value="1"/>
</dbReference>
<dbReference type="Pfam" id="PF00467">
    <property type="entry name" value="KOW"/>
    <property type="match status" value="1"/>
</dbReference>
<dbReference type="Pfam" id="PF17136">
    <property type="entry name" value="ribosomal_L24"/>
    <property type="match status" value="1"/>
</dbReference>
<dbReference type="SMART" id="SM00739">
    <property type="entry name" value="KOW"/>
    <property type="match status" value="1"/>
</dbReference>
<dbReference type="SUPFAM" id="SSF50104">
    <property type="entry name" value="Translation proteins SH3-like domain"/>
    <property type="match status" value="1"/>
</dbReference>
<dbReference type="PROSITE" id="PS01108">
    <property type="entry name" value="RIBOSOMAL_L24"/>
    <property type="match status" value="1"/>
</dbReference>